<feature type="chain" id="PRO_1000214631" description="Large ribosomal subunit protein uL5">
    <location>
        <begin position="1"/>
        <end position="179"/>
    </location>
</feature>
<gene>
    <name evidence="1" type="primary">rplE</name>
    <name type="ordered locus">GM21_3316</name>
</gene>
<accession>C6E4P5</accession>
<sequence length="179" mass="19860">MARLAELYNKEMVPALMKDQNYKNIMEVPKLVKIVVNMGLGEAIQNVKILDSAAEELAAITGQRPVITKAKKSIAGFKLRQGMPIGCAVTLRRDKMYEFLDRLVSVSLPRVRDFKGISGKAFDGKGNYSLGVKEQLIFPEIDYDKVDKIKGLNITIVTTAKTDAEGKALLKLMGLPFRN</sequence>
<evidence type="ECO:0000255" key="1">
    <source>
        <dbReference type="HAMAP-Rule" id="MF_01333"/>
    </source>
</evidence>
<evidence type="ECO:0000305" key="2"/>
<proteinExistence type="inferred from homology"/>
<protein>
    <recommendedName>
        <fullName evidence="1">Large ribosomal subunit protein uL5</fullName>
    </recommendedName>
    <alternativeName>
        <fullName evidence="2">50S ribosomal protein L5</fullName>
    </alternativeName>
</protein>
<reference key="1">
    <citation type="submission" date="2009-07" db="EMBL/GenBank/DDBJ databases">
        <title>Complete sequence of Geobacter sp. M21.</title>
        <authorList>
            <consortium name="US DOE Joint Genome Institute"/>
            <person name="Lucas S."/>
            <person name="Copeland A."/>
            <person name="Lapidus A."/>
            <person name="Glavina del Rio T."/>
            <person name="Dalin E."/>
            <person name="Tice H."/>
            <person name="Bruce D."/>
            <person name="Goodwin L."/>
            <person name="Pitluck S."/>
            <person name="Saunders E."/>
            <person name="Brettin T."/>
            <person name="Detter J.C."/>
            <person name="Han C."/>
            <person name="Larimer F."/>
            <person name="Land M."/>
            <person name="Hauser L."/>
            <person name="Kyrpides N."/>
            <person name="Ovchinnikova G."/>
            <person name="Lovley D."/>
        </authorList>
    </citation>
    <scope>NUCLEOTIDE SEQUENCE [LARGE SCALE GENOMIC DNA]</scope>
    <source>
        <strain>M21</strain>
    </source>
</reference>
<comment type="function">
    <text evidence="1">This is one of the proteins that bind and probably mediate the attachment of the 5S RNA into the large ribosomal subunit, where it forms part of the central protuberance. In the 70S ribosome it contacts protein S13 of the 30S subunit (bridge B1b), connecting the 2 subunits; this bridge is implicated in subunit movement. Contacts the P site tRNA; the 5S rRNA and some of its associated proteins might help stabilize positioning of ribosome-bound tRNAs.</text>
</comment>
<comment type="subunit">
    <text evidence="1">Part of the 50S ribosomal subunit; part of the 5S rRNA/L5/L18/L25 subcomplex. Contacts the 5S rRNA and the P site tRNA. Forms a bridge to the 30S subunit in the 70S ribosome.</text>
</comment>
<comment type="similarity">
    <text evidence="1">Belongs to the universal ribosomal protein uL5 family.</text>
</comment>
<organism>
    <name type="scientific">Geobacter sp. (strain M21)</name>
    <dbReference type="NCBI Taxonomy" id="443144"/>
    <lineage>
        <taxon>Bacteria</taxon>
        <taxon>Pseudomonadati</taxon>
        <taxon>Thermodesulfobacteriota</taxon>
        <taxon>Desulfuromonadia</taxon>
        <taxon>Geobacterales</taxon>
        <taxon>Geobacteraceae</taxon>
        <taxon>Geobacter</taxon>
    </lineage>
</organism>
<dbReference type="EMBL" id="CP001661">
    <property type="protein sequence ID" value="ACT19341.1"/>
    <property type="molecule type" value="Genomic_DNA"/>
</dbReference>
<dbReference type="SMR" id="C6E4P5"/>
<dbReference type="STRING" id="443144.GM21_3316"/>
<dbReference type="KEGG" id="gem:GM21_3316"/>
<dbReference type="eggNOG" id="COG0094">
    <property type="taxonomic scope" value="Bacteria"/>
</dbReference>
<dbReference type="HOGENOM" id="CLU_061015_2_1_7"/>
<dbReference type="OrthoDB" id="9806626at2"/>
<dbReference type="GO" id="GO:1990904">
    <property type="term" value="C:ribonucleoprotein complex"/>
    <property type="evidence" value="ECO:0007669"/>
    <property type="project" value="UniProtKB-KW"/>
</dbReference>
<dbReference type="GO" id="GO:0005840">
    <property type="term" value="C:ribosome"/>
    <property type="evidence" value="ECO:0007669"/>
    <property type="project" value="UniProtKB-KW"/>
</dbReference>
<dbReference type="GO" id="GO:0019843">
    <property type="term" value="F:rRNA binding"/>
    <property type="evidence" value="ECO:0007669"/>
    <property type="project" value="UniProtKB-UniRule"/>
</dbReference>
<dbReference type="GO" id="GO:0003735">
    <property type="term" value="F:structural constituent of ribosome"/>
    <property type="evidence" value="ECO:0007669"/>
    <property type="project" value="InterPro"/>
</dbReference>
<dbReference type="GO" id="GO:0000049">
    <property type="term" value="F:tRNA binding"/>
    <property type="evidence" value="ECO:0007669"/>
    <property type="project" value="UniProtKB-UniRule"/>
</dbReference>
<dbReference type="GO" id="GO:0006412">
    <property type="term" value="P:translation"/>
    <property type="evidence" value="ECO:0007669"/>
    <property type="project" value="UniProtKB-UniRule"/>
</dbReference>
<dbReference type="FunFam" id="3.30.1440.10:FF:000001">
    <property type="entry name" value="50S ribosomal protein L5"/>
    <property type="match status" value="1"/>
</dbReference>
<dbReference type="Gene3D" id="3.30.1440.10">
    <property type="match status" value="1"/>
</dbReference>
<dbReference type="HAMAP" id="MF_01333_B">
    <property type="entry name" value="Ribosomal_uL5_B"/>
    <property type="match status" value="1"/>
</dbReference>
<dbReference type="InterPro" id="IPR002132">
    <property type="entry name" value="Ribosomal_uL5"/>
</dbReference>
<dbReference type="InterPro" id="IPR020930">
    <property type="entry name" value="Ribosomal_uL5_bac-type"/>
</dbReference>
<dbReference type="InterPro" id="IPR031309">
    <property type="entry name" value="Ribosomal_uL5_C"/>
</dbReference>
<dbReference type="InterPro" id="IPR020929">
    <property type="entry name" value="Ribosomal_uL5_CS"/>
</dbReference>
<dbReference type="InterPro" id="IPR022803">
    <property type="entry name" value="Ribosomal_uL5_dom_sf"/>
</dbReference>
<dbReference type="InterPro" id="IPR031310">
    <property type="entry name" value="Ribosomal_uL5_N"/>
</dbReference>
<dbReference type="NCBIfam" id="NF000585">
    <property type="entry name" value="PRK00010.1"/>
    <property type="match status" value="1"/>
</dbReference>
<dbReference type="PANTHER" id="PTHR11994">
    <property type="entry name" value="60S RIBOSOMAL PROTEIN L11-RELATED"/>
    <property type="match status" value="1"/>
</dbReference>
<dbReference type="Pfam" id="PF00281">
    <property type="entry name" value="Ribosomal_L5"/>
    <property type="match status" value="1"/>
</dbReference>
<dbReference type="Pfam" id="PF00673">
    <property type="entry name" value="Ribosomal_L5_C"/>
    <property type="match status" value="1"/>
</dbReference>
<dbReference type="PIRSF" id="PIRSF002161">
    <property type="entry name" value="Ribosomal_L5"/>
    <property type="match status" value="1"/>
</dbReference>
<dbReference type="SUPFAM" id="SSF55282">
    <property type="entry name" value="RL5-like"/>
    <property type="match status" value="1"/>
</dbReference>
<dbReference type="PROSITE" id="PS00358">
    <property type="entry name" value="RIBOSOMAL_L5"/>
    <property type="match status" value="1"/>
</dbReference>
<keyword id="KW-0687">Ribonucleoprotein</keyword>
<keyword id="KW-0689">Ribosomal protein</keyword>
<keyword id="KW-0694">RNA-binding</keyword>
<keyword id="KW-0699">rRNA-binding</keyword>
<keyword id="KW-0820">tRNA-binding</keyword>
<name>RL5_GEOSM</name>